<proteinExistence type="inferred from homology"/>
<dbReference type="EMBL" id="AE005674">
    <property type="protein sequence ID" value="AAN42293.2"/>
    <property type="molecule type" value="Genomic_DNA"/>
</dbReference>
<dbReference type="EMBL" id="AE014073">
    <property type="protein sequence ID" value="AAP16164.1"/>
    <property type="molecule type" value="Genomic_DNA"/>
</dbReference>
<dbReference type="RefSeq" id="NP_706586.2">
    <property type="nucleotide sequence ID" value="NC_004337.2"/>
</dbReference>
<dbReference type="RefSeq" id="WP_000034825.1">
    <property type="nucleotide sequence ID" value="NZ_WPGW01000002.1"/>
</dbReference>
<dbReference type="SMR" id="P0A975"/>
<dbReference type="STRING" id="198214.SF0657"/>
<dbReference type="PaxDb" id="198214-SF0657"/>
<dbReference type="GeneID" id="1023640"/>
<dbReference type="GeneID" id="98387317"/>
<dbReference type="KEGG" id="sfl:SF0657"/>
<dbReference type="KEGG" id="sfx:S0680"/>
<dbReference type="PATRIC" id="fig|198214.7.peg.764"/>
<dbReference type="HOGENOM" id="CLU_117621_2_1_6"/>
<dbReference type="Proteomes" id="UP000001006">
    <property type="component" value="Chromosome"/>
</dbReference>
<dbReference type="Proteomes" id="UP000002673">
    <property type="component" value="Chromosome"/>
</dbReference>
<dbReference type="GO" id="GO:0005829">
    <property type="term" value="C:cytosol"/>
    <property type="evidence" value="ECO:0007669"/>
    <property type="project" value="UniProtKB-ARBA"/>
</dbReference>
<dbReference type="GO" id="GO:0003677">
    <property type="term" value="F:DNA binding"/>
    <property type="evidence" value="ECO:0007669"/>
    <property type="project" value="UniProtKB-KW"/>
</dbReference>
<dbReference type="CDD" id="cd04458">
    <property type="entry name" value="CSP_CDS"/>
    <property type="match status" value="1"/>
</dbReference>
<dbReference type="FunFam" id="2.40.50.140:FF:000006">
    <property type="entry name" value="Cold shock protein CspC"/>
    <property type="match status" value="1"/>
</dbReference>
<dbReference type="Gene3D" id="6.20.370.130">
    <property type="match status" value="1"/>
</dbReference>
<dbReference type="Gene3D" id="2.40.50.140">
    <property type="entry name" value="Nucleic acid-binding proteins"/>
    <property type="match status" value="1"/>
</dbReference>
<dbReference type="InterPro" id="IPR012156">
    <property type="entry name" value="Cold_shock_CspA"/>
</dbReference>
<dbReference type="InterPro" id="IPR050181">
    <property type="entry name" value="Cold_shock_domain"/>
</dbReference>
<dbReference type="InterPro" id="IPR011129">
    <property type="entry name" value="CSD"/>
</dbReference>
<dbReference type="InterPro" id="IPR019844">
    <property type="entry name" value="CSD_CS"/>
</dbReference>
<dbReference type="InterPro" id="IPR002059">
    <property type="entry name" value="CSP_DNA-bd"/>
</dbReference>
<dbReference type="InterPro" id="IPR012340">
    <property type="entry name" value="NA-bd_OB-fold"/>
</dbReference>
<dbReference type="NCBIfam" id="NF007062">
    <property type="entry name" value="PRK09507.1"/>
    <property type="match status" value="1"/>
</dbReference>
<dbReference type="NCBIfam" id="NF008190">
    <property type="entry name" value="PRK10943.1"/>
    <property type="match status" value="1"/>
</dbReference>
<dbReference type="PANTHER" id="PTHR11544">
    <property type="entry name" value="COLD SHOCK DOMAIN CONTAINING PROTEINS"/>
    <property type="match status" value="1"/>
</dbReference>
<dbReference type="Pfam" id="PF00313">
    <property type="entry name" value="CSD"/>
    <property type="match status" value="1"/>
</dbReference>
<dbReference type="PIRSF" id="PIRSF002599">
    <property type="entry name" value="Cold_shock_A"/>
    <property type="match status" value="1"/>
</dbReference>
<dbReference type="PRINTS" id="PR00050">
    <property type="entry name" value="COLDSHOCK"/>
</dbReference>
<dbReference type="SMART" id="SM00357">
    <property type="entry name" value="CSP"/>
    <property type="match status" value="1"/>
</dbReference>
<dbReference type="SUPFAM" id="SSF50249">
    <property type="entry name" value="Nucleic acid-binding proteins"/>
    <property type="match status" value="1"/>
</dbReference>
<dbReference type="PROSITE" id="PS00352">
    <property type="entry name" value="CSD_1"/>
    <property type="match status" value="1"/>
</dbReference>
<dbReference type="PROSITE" id="PS51857">
    <property type="entry name" value="CSD_2"/>
    <property type="match status" value="1"/>
</dbReference>
<organism>
    <name type="scientific">Shigella flexneri</name>
    <dbReference type="NCBI Taxonomy" id="623"/>
    <lineage>
        <taxon>Bacteria</taxon>
        <taxon>Pseudomonadati</taxon>
        <taxon>Pseudomonadota</taxon>
        <taxon>Gammaproteobacteria</taxon>
        <taxon>Enterobacterales</taxon>
        <taxon>Enterobacteriaceae</taxon>
        <taxon>Shigella</taxon>
    </lineage>
</organism>
<sequence length="69" mass="7463">MSKIKGNVKWFNESKGFGFITPEDGSKDVFVHFSAIQTNGFKTLAEGQRVEFEITNGAKGPSAANVIAL</sequence>
<keyword id="KW-0010">Activator</keyword>
<keyword id="KW-0963">Cytoplasm</keyword>
<keyword id="KW-0238">DNA-binding</keyword>
<keyword id="KW-1185">Reference proteome</keyword>
<keyword id="KW-0804">Transcription</keyword>
<keyword id="KW-0805">Transcription regulation</keyword>
<feature type="initiator methionine" description="Removed" evidence="1">
    <location>
        <position position="1"/>
    </location>
</feature>
<feature type="chain" id="PRO_0000100256" description="Cold shock-like protein CspE">
    <location>
        <begin position="2"/>
        <end position="69"/>
    </location>
</feature>
<feature type="domain" description="CSD">
    <location>
        <begin position="6"/>
        <end position="66"/>
    </location>
</feature>
<name>CSPE_SHIFL</name>
<protein>
    <recommendedName>
        <fullName>Cold shock-like protein CspE</fullName>
        <shortName>CSP-E</shortName>
    </recommendedName>
</protein>
<accession>P0A975</accession>
<accession>P36997</accession>
<accession>P77103</accession>
<accession>P80434</accession>
<gene>
    <name type="primary">cspE</name>
    <name type="ordered locus">SF0657</name>
    <name type="ordered locus">S0680</name>
</gene>
<reference key="1">
    <citation type="journal article" date="2002" name="Nucleic Acids Res.">
        <title>Genome sequence of Shigella flexneri 2a: insights into pathogenicity through comparison with genomes of Escherichia coli K12 and O157.</title>
        <authorList>
            <person name="Jin Q."/>
            <person name="Yuan Z."/>
            <person name="Xu J."/>
            <person name="Wang Y."/>
            <person name="Shen Y."/>
            <person name="Lu W."/>
            <person name="Wang J."/>
            <person name="Liu H."/>
            <person name="Yang J."/>
            <person name="Yang F."/>
            <person name="Zhang X."/>
            <person name="Zhang J."/>
            <person name="Yang G."/>
            <person name="Wu H."/>
            <person name="Qu D."/>
            <person name="Dong J."/>
            <person name="Sun L."/>
            <person name="Xue Y."/>
            <person name="Zhao A."/>
            <person name="Gao Y."/>
            <person name="Zhu J."/>
            <person name="Kan B."/>
            <person name="Ding K."/>
            <person name="Chen S."/>
            <person name="Cheng H."/>
            <person name="Yao Z."/>
            <person name="He B."/>
            <person name="Chen R."/>
            <person name="Ma D."/>
            <person name="Qiang B."/>
            <person name="Wen Y."/>
            <person name="Hou Y."/>
            <person name="Yu J."/>
        </authorList>
    </citation>
    <scope>NUCLEOTIDE SEQUENCE [LARGE SCALE GENOMIC DNA]</scope>
    <source>
        <strain>301 / Serotype 2a</strain>
    </source>
</reference>
<reference key="2">
    <citation type="journal article" date="2003" name="Infect. Immun.">
        <title>Complete genome sequence and comparative genomics of Shigella flexneri serotype 2a strain 2457T.</title>
        <authorList>
            <person name="Wei J."/>
            <person name="Goldberg M.B."/>
            <person name="Burland V."/>
            <person name="Venkatesan M.M."/>
            <person name="Deng W."/>
            <person name="Fournier G."/>
            <person name="Mayhew G.F."/>
            <person name="Plunkett G. III"/>
            <person name="Rose D.J."/>
            <person name="Darling A."/>
            <person name="Mau B."/>
            <person name="Perna N.T."/>
            <person name="Payne S.M."/>
            <person name="Runyen-Janecky L.J."/>
            <person name="Zhou S."/>
            <person name="Schwartz D.C."/>
            <person name="Blattner F.R."/>
        </authorList>
    </citation>
    <scope>NUCLEOTIDE SEQUENCE [LARGE SCALE GENOMIC DNA]</scope>
    <source>
        <strain>ATCC 700930 / 2457T / Serotype 2a</strain>
    </source>
</reference>
<evidence type="ECO:0000250" key="1"/>
<comment type="subcellular location">
    <subcellularLocation>
        <location evidence="1">Cytoplasm</location>
    </subcellularLocation>
</comment>